<dbReference type="EMBL" id="AY596196">
    <property type="protein sequence ID" value="AAU06317.1"/>
    <property type="molecule type" value="mRNA"/>
</dbReference>
<dbReference type="EMBL" id="AY360471">
    <property type="protein sequence ID" value="AAQ64009.1"/>
    <property type="molecule type" value="mRNA"/>
</dbReference>
<dbReference type="CCDS" id="CCDS20920.1">
    <molecule id="Q66X22-1"/>
</dbReference>
<dbReference type="RefSeq" id="NP_918947.2">
    <molecule id="Q66X22-1"/>
    <property type="nucleotide sequence ID" value="NM_194058.2"/>
</dbReference>
<dbReference type="RefSeq" id="XP_006540001.1">
    <molecule id="Q66X22-1"/>
    <property type="nucleotide sequence ID" value="XM_006539938.2"/>
</dbReference>
<dbReference type="RefSeq" id="XP_006540002.1">
    <molecule id="Q66X22-1"/>
    <property type="nucleotide sequence ID" value="XM_006539939.2"/>
</dbReference>
<dbReference type="SMR" id="Q66X22"/>
<dbReference type="BioGRID" id="232574">
    <property type="interactions" value="1"/>
</dbReference>
<dbReference type="FunCoup" id="Q66X22">
    <property type="interactions" value="119"/>
</dbReference>
<dbReference type="STRING" id="10090.ENSMUSP00000072895"/>
<dbReference type="GlyGen" id="Q66X22">
    <property type="glycosylation" value="1 site"/>
</dbReference>
<dbReference type="iPTMnet" id="Q66X22"/>
<dbReference type="PhosphoSitePlus" id="Q66X22"/>
<dbReference type="jPOST" id="Q66X22"/>
<dbReference type="PaxDb" id="10090-ENSMUSP00000072895"/>
<dbReference type="ProteomicsDB" id="293577">
    <molecule id="Q66X22-1"/>
</dbReference>
<dbReference type="DNASU" id="243874"/>
<dbReference type="Ensembl" id="ENSMUST00000073151.13">
    <molecule id="Q66X22-1"/>
    <property type="protein sequence ID" value="ENSMUSP00000072895.7"/>
    <property type="gene ID" value="ENSMUSG00000060508.17"/>
</dbReference>
<dbReference type="Ensembl" id="ENSMUST00000117909.2">
    <molecule id="Q66X22-2"/>
    <property type="protein sequence ID" value="ENSMUSP00000113762.2"/>
    <property type="gene ID" value="ENSMUSG00000060508.17"/>
</dbReference>
<dbReference type="GeneID" id="243874"/>
<dbReference type="KEGG" id="mmu:243874"/>
<dbReference type="UCSC" id="uc009fnt.1">
    <molecule id="Q66X22-1"/>
    <property type="organism name" value="mouse"/>
</dbReference>
<dbReference type="UCSC" id="uc012fbm.1">
    <molecule id="Q66X22-2"/>
    <property type="organism name" value="mouse"/>
</dbReference>
<dbReference type="AGR" id="MGI:2675377"/>
<dbReference type="CTD" id="243874"/>
<dbReference type="MGI" id="MGI:2675377">
    <property type="gene designation" value="Nlrp9b"/>
</dbReference>
<dbReference type="VEuPathDB" id="HostDB:ENSMUSG00000060508"/>
<dbReference type="eggNOG" id="KOG4308">
    <property type="taxonomic scope" value="Eukaryota"/>
</dbReference>
<dbReference type="GeneTree" id="ENSGT00940000163218"/>
<dbReference type="HOGENOM" id="CLU_002274_2_1_1"/>
<dbReference type="InParanoid" id="Q66X22"/>
<dbReference type="OMA" id="LKHPHCA"/>
<dbReference type="OrthoDB" id="120976at2759"/>
<dbReference type="PhylomeDB" id="Q66X22"/>
<dbReference type="BioGRID-ORCS" id="243874">
    <property type="hits" value="2 hits in 76 CRISPR screens"/>
</dbReference>
<dbReference type="PRO" id="PR:Q66X22"/>
<dbReference type="Proteomes" id="UP000000589">
    <property type="component" value="Chromosome 7"/>
</dbReference>
<dbReference type="RNAct" id="Q66X22">
    <property type="molecule type" value="protein"/>
</dbReference>
<dbReference type="Bgee" id="ENSMUSG00000060508">
    <property type="expression patterns" value="Expressed in animal zygote and 33 other cell types or tissues"/>
</dbReference>
<dbReference type="ExpressionAtlas" id="Q66X22">
    <property type="expression patterns" value="baseline and differential"/>
</dbReference>
<dbReference type="GO" id="GO:0061702">
    <property type="term" value="C:canonical inflammasome complex"/>
    <property type="evidence" value="ECO:0000250"/>
    <property type="project" value="UniProtKB"/>
</dbReference>
<dbReference type="GO" id="GO:0005524">
    <property type="term" value="F:ATP binding"/>
    <property type="evidence" value="ECO:0007669"/>
    <property type="project" value="UniProtKB-KW"/>
</dbReference>
<dbReference type="GO" id="GO:0001824">
    <property type="term" value="P:blastocyst development"/>
    <property type="evidence" value="ECO:0000316"/>
    <property type="project" value="MGI"/>
</dbReference>
<dbReference type="GO" id="GO:0051607">
    <property type="term" value="P:defense response to virus"/>
    <property type="evidence" value="ECO:0000315"/>
    <property type="project" value="UniProtKB"/>
</dbReference>
<dbReference type="GO" id="GO:0045087">
    <property type="term" value="P:innate immune response"/>
    <property type="evidence" value="ECO:0000315"/>
    <property type="project" value="UniProtKB"/>
</dbReference>
<dbReference type="GO" id="GO:0032741">
    <property type="term" value="P:positive regulation of interleukin-18 production"/>
    <property type="evidence" value="ECO:0000315"/>
    <property type="project" value="UniProtKB"/>
</dbReference>
<dbReference type="GO" id="GO:0070269">
    <property type="term" value="P:pyroptotic inflammatory response"/>
    <property type="evidence" value="ECO:0000315"/>
    <property type="project" value="UniProtKB"/>
</dbReference>
<dbReference type="CDD" id="cd08320">
    <property type="entry name" value="Pyrin_NALPs"/>
    <property type="match status" value="1"/>
</dbReference>
<dbReference type="FunFam" id="3.80.10.10:FF:000465">
    <property type="entry name" value="NACHT, LRR and PYD domains-containing protein 11"/>
    <property type="match status" value="1"/>
</dbReference>
<dbReference type="FunFam" id="3.40.50.300:FF:000442">
    <property type="entry name" value="NACHT, LRR and PYD domains-containing protein 3"/>
    <property type="match status" value="1"/>
</dbReference>
<dbReference type="Gene3D" id="1.10.533.10">
    <property type="entry name" value="Death Domain, Fas"/>
    <property type="match status" value="1"/>
</dbReference>
<dbReference type="Gene3D" id="3.40.50.300">
    <property type="entry name" value="P-loop containing nucleotide triphosphate hydrolases"/>
    <property type="match status" value="1"/>
</dbReference>
<dbReference type="Gene3D" id="3.80.10.10">
    <property type="entry name" value="Ribonuclease Inhibitor"/>
    <property type="match status" value="1"/>
</dbReference>
<dbReference type="InterPro" id="IPR004020">
    <property type="entry name" value="DAPIN"/>
</dbReference>
<dbReference type="InterPro" id="IPR011029">
    <property type="entry name" value="DEATH-like_dom_sf"/>
</dbReference>
<dbReference type="InterPro" id="IPR032675">
    <property type="entry name" value="LRR_dom_sf"/>
</dbReference>
<dbReference type="InterPro" id="IPR007111">
    <property type="entry name" value="NACHT_NTPase"/>
</dbReference>
<dbReference type="InterPro" id="IPR041267">
    <property type="entry name" value="NLRP_HD2"/>
</dbReference>
<dbReference type="InterPro" id="IPR050637">
    <property type="entry name" value="NLRP_innate_immun_reg"/>
</dbReference>
<dbReference type="InterPro" id="IPR041075">
    <property type="entry name" value="NOD1/2_WH"/>
</dbReference>
<dbReference type="InterPro" id="IPR027417">
    <property type="entry name" value="P-loop_NTPase"/>
</dbReference>
<dbReference type="PANTHER" id="PTHR45690">
    <property type="entry name" value="NACHT, LRR AND PYD DOMAINS-CONTAINING PROTEIN 12"/>
    <property type="match status" value="1"/>
</dbReference>
<dbReference type="PANTHER" id="PTHR45690:SF13">
    <property type="entry name" value="NACHT, LRR AND PYD DOMAINS-CONTAINING PROTEIN 9"/>
    <property type="match status" value="1"/>
</dbReference>
<dbReference type="Pfam" id="PF05729">
    <property type="entry name" value="NACHT"/>
    <property type="match status" value="1"/>
</dbReference>
<dbReference type="Pfam" id="PF17776">
    <property type="entry name" value="NLRC4_HD2"/>
    <property type="match status" value="1"/>
</dbReference>
<dbReference type="Pfam" id="PF17779">
    <property type="entry name" value="NOD2_WH"/>
    <property type="match status" value="1"/>
</dbReference>
<dbReference type="Pfam" id="PF02758">
    <property type="entry name" value="PYRIN"/>
    <property type="match status" value="1"/>
</dbReference>
<dbReference type="SMART" id="SM00368">
    <property type="entry name" value="LRR_RI"/>
    <property type="match status" value="8"/>
</dbReference>
<dbReference type="SMART" id="SM01289">
    <property type="entry name" value="PYRIN"/>
    <property type="match status" value="1"/>
</dbReference>
<dbReference type="SUPFAM" id="SSF47986">
    <property type="entry name" value="DEATH domain"/>
    <property type="match status" value="1"/>
</dbReference>
<dbReference type="SUPFAM" id="SSF52540">
    <property type="entry name" value="P-loop containing nucleoside triphosphate hydrolases"/>
    <property type="match status" value="1"/>
</dbReference>
<dbReference type="SUPFAM" id="SSF52047">
    <property type="entry name" value="RNI-like"/>
    <property type="match status" value="1"/>
</dbReference>
<dbReference type="PROSITE" id="PS50824">
    <property type="entry name" value="DAPIN"/>
    <property type="match status" value="1"/>
</dbReference>
<dbReference type="PROSITE" id="PS50837">
    <property type="entry name" value="NACHT"/>
    <property type="match status" value="1"/>
</dbReference>
<accession>Q66X22</accession>
<accession>Q6UTW9</accession>
<reference key="1">
    <citation type="journal article" date="2004" name="Hum. Mol. Genet.">
        <title>Age-associated alteration of gene expression patterns in mouse oocytes.</title>
        <authorList>
            <person name="Hamatani T."/>
            <person name="Falco G."/>
            <person name="Carter M.G."/>
            <person name="Akutsu H."/>
            <person name="Stagg C.A."/>
            <person name="Sharov A.A."/>
            <person name="Dudekula D.B."/>
            <person name="VanBuren V."/>
            <person name="Ko M.S.H."/>
        </authorList>
    </citation>
    <scope>NUCLEOTIDE SEQUENCE [MRNA] (ISOFORM 1)</scope>
    <scope>TISSUE SPECIFICITY</scope>
    <scope>DEVELOPMENTAL STAGE</scope>
</reference>
<reference key="2">
    <citation type="submission" date="2003-08" db="EMBL/GenBank/DDBJ databases">
        <title>Murine NALPs: a family of proteins involved in inflammation.</title>
        <authorList>
            <person name="Martinon F."/>
            <person name="Hofmann K."/>
            <person name="Tschopp J."/>
        </authorList>
    </citation>
    <scope>NUCLEOTIDE SEQUENCE [MRNA] (ISOFORM 2)</scope>
    <source>
        <strain>C57BL/6J</strain>
    </source>
</reference>
<reference key="3">
    <citation type="journal article" date="2015" name="J. Reprod. Dev.">
        <title>NLRP9B protein is dispensable for oocyte maturation and early embryonic development in the mouse.</title>
        <authorList>
            <person name="Peng H."/>
            <person name="Lin X."/>
            <person name="Liu F."/>
            <person name="Wang C."/>
            <person name="Zhang W."/>
        </authorList>
    </citation>
    <scope>SUBCELLULAR LOCATION</scope>
    <scope>TISSUE SPECIFICITY</scope>
    <scope>DEVELOPMENTAL STAGE</scope>
</reference>
<reference key="4">
    <citation type="journal article" date="2017" name="Nature">
        <title>Nlrp9b inflammasome restricts rotavirus infection in intestinal epithelial cells.</title>
        <authorList>
            <person name="Zhu S."/>
            <person name="Ding S."/>
            <person name="Wang P."/>
            <person name="Wei Z."/>
            <person name="Pan W."/>
            <person name="Palm N.W."/>
            <person name="Yang Y."/>
            <person name="Yu H."/>
            <person name="Li H.B."/>
            <person name="Wang G."/>
            <person name="Lei X."/>
            <person name="de Zoete M.R."/>
            <person name="Zhao J."/>
            <person name="Zheng Y."/>
            <person name="Chen H."/>
            <person name="Zhao Y."/>
            <person name="Jurado K.A."/>
            <person name="Feng N."/>
            <person name="Shan L."/>
            <person name="Kluger Y."/>
            <person name="Lu J."/>
            <person name="Abraham C."/>
            <person name="Fikrig E."/>
            <person name="Greenberg H.B."/>
            <person name="Flavell R.A."/>
        </authorList>
    </citation>
    <scope>FUNCTION</scope>
    <scope>TISSUE SPECIFICITY</scope>
    <scope>DISRUPTION PHENOTYPE</scope>
    <scope>SUBCELLULAR LOCATION</scope>
</reference>
<comment type="function">
    <text evidence="6">As the sensor component of the NLRP9 inflammasome, plays a crucial role in innate immunity and inflammation. In response to pathogens, including rotavirus, initiates the formation of the inflammasome polymeric complex, made of NLRP9, PYCARD and CASP1. Recruitment of proCASP1 to the inflammasome promotes its activation and CASP1-catalyzed IL1B and IL18 maturation and release in the extracellular milieu. The active cytokines stimulate inflammatory responses. Inflammasomes can also induce pyroptosis, an inflammatory form of programmed cell death. NLRP9 inflammasome activation may be initiated by DHX9 interaction with viral double-stranded RNA (dsRNA), preferentially to short dsRNA segments.</text>
</comment>
<comment type="subunit">
    <text evidence="1">Sensor component of NLRP9 inflammasomes. Inflammasomes are supramolecular complexes that assemble in the cytosol in response to pathogens, such as rotavirus, but not encephalomyocarditis virus (EMCV), and play critical roles in innate immunity and inflammation. The core of NLRP9 inflammasomes consists of a signal sensor component (NLRP9), an adapter (ASC/PYCARD), which recruits an effector pro-inflammatory caspase (CASP1). Within the complex, NLRP9 and PYCARD interact via their respective DAPIN/pyrin domains. This interaction initiates speck formation (nucleation) which greatly enhances further addition of soluble PYCARD molecules to the speck in a prion-like polymerization process. Clustered PYCARD nucleates the formation of CASP1 filaments through the interaction of their respective CARD domains, acting as a platform for CASP1 polymerization. CASP1 filament formation increases local enzyme concentration, resulting in trans-autocleavage and activation. Active CASP1 then processes IL1B and IL18 precursors, leading to the release of mature cytokines in the extracellular milieu and inflammatory response. Interacts with DHX9 upon rotavirus infection; this interaction may trigger inflammasome activation and inflammatory response.</text>
</comment>
<comment type="subcellular location">
    <subcellularLocation>
        <location evidence="5">Cytoplasm</location>
    </subcellularLocation>
    <subcellularLocation>
        <location evidence="1">Inflammasome</location>
    </subcellularLocation>
</comment>
<comment type="alternative products">
    <event type="alternative splicing"/>
    <isoform>
        <id>Q66X22-1</id>
        <name>1</name>
        <sequence type="displayed"/>
    </isoform>
    <isoform>
        <id>Q66X22-2</id>
        <name>2</name>
        <sequence type="described" ref="VSP_025024 VSP_025025 VSP_025026"/>
    </isoform>
</comment>
<comment type="tissue specificity">
    <text evidence="4 5 6">Predominantly expressed in the intestine, including proximal and distal colon, cecum, ileum, jejunum and duodenum (at protein level) (PubMed:26411641, PubMed:28636595). In the ileum, expressed in epithelial cells (PubMed:28636595). Also expressed in oocytes at all follicular stages and in preimplantation embryos (at protein level) (PubMed:15317747, PubMed:26411641). Although expression decreases in preimplantation embryos, it is still detectable in blastocyts (PubMed:26411641).</text>
</comment>
<comment type="developmental stage">
    <text evidence="4 5 6">Down-regulated in preimplantation embryos, with decreased levels observed at the 4-cell stages. Still detectable in blastocysts (at protein level) (PubMed:15317747). Expression in oocytes decline with age. It is much higher at 10 weeks of age rather than at 40 (at protein level) (PubMed:26411641). In ileum epithelial cells, up-regulated in the first 12 hours following rotavirus infection. Levels drastically decrease 36 hours post infection (at protein level) (PubMed:28636595).</text>
</comment>
<comment type="disruption phenotype">
    <text evidence="6">No visible phenotype. Mutant mice exhibit normal gut homeostasis and microbiota composition. Following rotavirus infection, mutant animals have higher viral loads in the small intestine, increased fecal shedding of viral antigens, and more frequent incidences of diarrhea compared to wild-type littermates. Mice with a conditional knockout in ileum intestinal epithelial cells are also more susceptible to rotavirus infection compared to control animals.</text>
</comment>
<organism>
    <name type="scientific">Mus musculus</name>
    <name type="common">Mouse</name>
    <dbReference type="NCBI Taxonomy" id="10090"/>
    <lineage>
        <taxon>Eukaryota</taxon>
        <taxon>Metazoa</taxon>
        <taxon>Chordata</taxon>
        <taxon>Craniata</taxon>
        <taxon>Vertebrata</taxon>
        <taxon>Euteleostomi</taxon>
        <taxon>Mammalia</taxon>
        <taxon>Eutheria</taxon>
        <taxon>Euarchontoglires</taxon>
        <taxon>Glires</taxon>
        <taxon>Rodentia</taxon>
        <taxon>Myomorpha</taxon>
        <taxon>Muroidea</taxon>
        <taxon>Muridae</taxon>
        <taxon>Murinae</taxon>
        <taxon>Mus</taxon>
        <taxon>Mus</taxon>
    </lineage>
</organism>
<gene>
    <name type="primary">Nlrp9b</name>
    <name type="synonym">Nalp9</name>
    <name type="synonym">Nalp9b</name>
</gene>
<proteinExistence type="evidence at protein level"/>
<keyword id="KW-0025">Alternative splicing</keyword>
<keyword id="KW-0067">ATP-binding</keyword>
<keyword id="KW-0963">Cytoplasm</keyword>
<keyword id="KW-0391">Immunity</keyword>
<keyword id="KW-1271">Inflammasome</keyword>
<keyword id="KW-0395">Inflammatory response</keyword>
<keyword id="KW-0399">Innate immunity</keyword>
<keyword id="KW-0433">Leucine-rich repeat</keyword>
<keyword id="KW-0547">Nucleotide-binding</keyword>
<keyword id="KW-1185">Reference proteome</keyword>
<keyword id="KW-0677">Repeat</keyword>
<name>NLR9B_MOUSE</name>
<evidence type="ECO:0000250" key="1">
    <source>
        <dbReference type="UniProtKB" id="Q7RTR0"/>
    </source>
</evidence>
<evidence type="ECO:0000255" key="2">
    <source>
        <dbReference type="PROSITE-ProRule" id="PRU00061"/>
    </source>
</evidence>
<evidence type="ECO:0000255" key="3">
    <source>
        <dbReference type="PROSITE-ProRule" id="PRU00136"/>
    </source>
</evidence>
<evidence type="ECO:0000269" key="4">
    <source>
    </source>
</evidence>
<evidence type="ECO:0000269" key="5">
    <source>
    </source>
</evidence>
<evidence type="ECO:0000269" key="6">
    <source>
    </source>
</evidence>
<evidence type="ECO:0000303" key="7">
    <source ref="2"/>
</evidence>
<protein>
    <recommendedName>
        <fullName>NACHT, LRR and PYD domains-containing protein 9B</fullName>
    </recommendedName>
    <alternativeName>
        <fullName>NALP-delta</fullName>
    </alternativeName>
</protein>
<feature type="chain" id="PRO_0000286336" description="NACHT, LRR and PYD domains-containing protein 9B">
    <location>
        <begin position="1"/>
        <end position="1003"/>
    </location>
</feature>
<feature type="domain" description="Pyrin" evidence="2">
    <location>
        <begin position="1"/>
        <end position="91"/>
    </location>
</feature>
<feature type="domain" description="NACHT" evidence="3">
    <location>
        <begin position="143"/>
        <end position="465"/>
    </location>
</feature>
<feature type="repeat" description="LRR 1">
    <location>
        <begin position="749"/>
        <end position="770"/>
    </location>
</feature>
<feature type="repeat" description="LRR 2">
    <location>
        <begin position="778"/>
        <end position="799"/>
    </location>
</feature>
<feature type="repeat" description="LRR 3">
    <location>
        <begin position="806"/>
        <end position="826"/>
    </location>
</feature>
<feature type="repeat" description="LRR 4">
    <location>
        <begin position="835"/>
        <end position="856"/>
    </location>
</feature>
<feature type="repeat" description="LRR 5">
    <location>
        <begin position="863"/>
        <end position="883"/>
    </location>
</feature>
<feature type="repeat" description="LRR 6">
    <location>
        <begin position="892"/>
        <end position="913"/>
    </location>
</feature>
<feature type="repeat" description="LRR 7">
    <location>
        <begin position="920"/>
        <end position="940"/>
    </location>
</feature>
<feature type="binding site" evidence="3">
    <location>
        <begin position="149"/>
        <end position="156"/>
    </location>
    <ligand>
        <name>ATP</name>
        <dbReference type="ChEBI" id="CHEBI:30616"/>
    </ligand>
</feature>
<feature type="splice variant" id="VSP_025024" description="In isoform 2." evidence="7">
    <location>
        <begin position="178"/>
        <end position="617"/>
    </location>
</feature>
<feature type="splice variant" id="VSP_025025" description="In isoform 2." evidence="7">
    <location>
        <begin position="842"/>
        <end position="898"/>
    </location>
</feature>
<feature type="splice variant" id="VSP_025026" description="In isoform 2." evidence="7">
    <original>LDKSAFSEESQTLLQDVEKKNNNLNILHHPWFEAERNKRGTRLVWNSRN</original>
    <variation>SGELMFLMKWKDSDEADLVQAKEANMICPQIVISFYGERLTWHS</variation>
    <location>
        <begin position="955"/>
        <end position="1003"/>
    </location>
</feature>
<sequence>MAGSSGYGLLKLLQKLSDEEFQRFKELLREEPEKFKLKPISWTKIENSSKESLVTLLNTHYPGQAWNMMLSLFLQVNREDLSIMAQKKKRHKQTKYKKFMKTTFERIWTLETNTHIPDRNYHLIVEVQYKALQEIFDSESEPVTAIVAGTTGEGKTTFLRKAMLDWASGVLLQNRFQYVFFFSVFSLNNTTELSLAELISSTLPESSETVDDILSDPKRILFILDGFDYLKFDLELRTNLCNDWRKRLPTQIVLSSLLQKIMLPGCSLLLELGQISVPKIRHLLKYPRVITMQGFSERSVEFYCMSFFDNQRGIEVAENLRNNEVLHLCSNPYLCWMFCSCLKWQFDREEEGYFKAKTDAAFFTNFMVSAFKSTYAHSPSKQNRARLKTLCTLAVEGMWKELFVFDSEDLRRNGISESDKAVWLKMQFLQTHGNHTVFYHPTLQSYFAAMFYFLKQDKDICVPVIGSIPQLLGNMYARGQTQWLQLGTFLFGLINEQVAALLQPCFGFIQPIYVRQEIICYFKCLGQQECNEKLERSQTLFSCLRDSQEERFVRQVVDLLEEITVDISSSDVLSVTAYALQKSSKLKKLHLHIQKTVFSEIYCPDHCKTRTSIGKRRNTAEYWKTLCGIFCNLYVLDLDSCQFNKRAIQDLCNSMSPTPTVPLTAFKLQSLSCSFMADFGDGSLFHTLLQLPHLKYLNLYGTYLSMDVTEKLCAALRCSACRVEELLLGKCGISSKACGIIAISLINSKVKHLSLVENPLKNKGVMSLCEMLKDPSCVLQSLMLSYCCLTFIACGHLYEALLSNKHLSLLDLGSNFLEDTGVNLLCEALKDPNCTLKELWLPGCFLTSQCCEEISAVLICNRNLKTLKLGNNNIQDTGVRQLCEALSHPNCNLECLGLDLCEFTSDCCKDLALALTTCKTLNSLNLDWKTLDHSGLVVLCEALNHKRCNLKMLGLDKSAFSEESQTLLQDVEKKNNNLNILHHPWFEAERNKRGTRLVWNSRN</sequence>